<sequence>MEKAYRIKKNTDFQTIYKRGKSVANRQFVVYTYNSNKDHFRLGISVSKKLGNAVTRNRIKRAIRENFKIHKEDIIARDIIVIARQPAKDMTTLEIQGSLEHVLKIAKVFNKKIK</sequence>
<protein>
    <recommendedName>
        <fullName evidence="1">Ribonuclease P protein component</fullName>
        <shortName evidence="1">RNase P protein</shortName>
        <shortName evidence="1">RNaseP protein</shortName>
        <ecNumber evidence="1">3.1.26.5</ecNumber>
    </recommendedName>
    <alternativeName>
        <fullName evidence="1">Protein C5</fullName>
    </alternativeName>
</protein>
<organism>
    <name type="scientific">Staphylococcus haemolyticus (strain JCSC1435)</name>
    <dbReference type="NCBI Taxonomy" id="279808"/>
    <lineage>
        <taxon>Bacteria</taxon>
        <taxon>Bacillati</taxon>
        <taxon>Bacillota</taxon>
        <taxon>Bacilli</taxon>
        <taxon>Bacillales</taxon>
        <taxon>Staphylococcaceae</taxon>
        <taxon>Staphylococcus</taxon>
    </lineage>
</organism>
<accession>Q4L2Z1</accession>
<comment type="function">
    <text evidence="1">RNaseP catalyzes the removal of the 5'-leader sequence from pre-tRNA to produce the mature 5'-terminus. It can also cleave other RNA substrates such as 4.5S RNA. The protein component plays an auxiliary but essential role in vivo by binding to the 5'-leader sequence and broadening the substrate specificity of the ribozyme.</text>
</comment>
<comment type="catalytic activity">
    <reaction evidence="1">
        <text>Endonucleolytic cleavage of RNA, removing 5'-extranucleotides from tRNA precursor.</text>
        <dbReference type="EC" id="3.1.26.5"/>
    </reaction>
</comment>
<comment type="subunit">
    <text evidence="1">Consists of a catalytic RNA component (M1 or rnpB) and a protein subunit.</text>
</comment>
<comment type="similarity">
    <text evidence="1">Belongs to the RnpA family.</text>
</comment>
<feature type="chain" id="PRO_1000021473" description="Ribonuclease P protein component">
    <location>
        <begin position="1"/>
        <end position="114"/>
    </location>
</feature>
<proteinExistence type="inferred from homology"/>
<evidence type="ECO:0000255" key="1">
    <source>
        <dbReference type="HAMAP-Rule" id="MF_00227"/>
    </source>
</evidence>
<keyword id="KW-0255">Endonuclease</keyword>
<keyword id="KW-0378">Hydrolase</keyword>
<keyword id="KW-0540">Nuclease</keyword>
<keyword id="KW-0694">RNA-binding</keyword>
<keyword id="KW-0819">tRNA processing</keyword>
<gene>
    <name evidence="1" type="primary">rnpA</name>
    <name type="ordered locus">SH2677</name>
</gene>
<reference key="1">
    <citation type="journal article" date="2005" name="J. Bacteriol.">
        <title>Whole-genome sequencing of Staphylococcus haemolyticus uncovers the extreme plasticity of its genome and the evolution of human-colonizing staphylococcal species.</title>
        <authorList>
            <person name="Takeuchi F."/>
            <person name="Watanabe S."/>
            <person name="Baba T."/>
            <person name="Yuzawa H."/>
            <person name="Ito T."/>
            <person name="Morimoto Y."/>
            <person name="Kuroda M."/>
            <person name="Cui L."/>
            <person name="Takahashi M."/>
            <person name="Ankai A."/>
            <person name="Baba S."/>
            <person name="Fukui S."/>
            <person name="Lee J.C."/>
            <person name="Hiramatsu K."/>
        </authorList>
    </citation>
    <scope>NUCLEOTIDE SEQUENCE [LARGE SCALE GENOMIC DNA]</scope>
    <source>
        <strain>JCSC1435</strain>
    </source>
</reference>
<name>RNPA_STAHJ</name>
<dbReference type="EC" id="3.1.26.5" evidence="1"/>
<dbReference type="EMBL" id="AP006716">
    <property type="protein sequence ID" value="BAE05986.1"/>
    <property type="molecule type" value="Genomic_DNA"/>
</dbReference>
<dbReference type="SMR" id="Q4L2Z1"/>
<dbReference type="KEGG" id="sha:SH2677"/>
<dbReference type="eggNOG" id="COG0594">
    <property type="taxonomic scope" value="Bacteria"/>
</dbReference>
<dbReference type="HOGENOM" id="CLU_117179_9_1_9"/>
<dbReference type="OrthoDB" id="9810867at2"/>
<dbReference type="Proteomes" id="UP000000543">
    <property type="component" value="Chromosome"/>
</dbReference>
<dbReference type="GO" id="GO:0030677">
    <property type="term" value="C:ribonuclease P complex"/>
    <property type="evidence" value="ECO:0007669"/>
    <property type="project" value="TreeGrafter"/>
</dbReference>
<dbReference type="GO" id="GO:0042781">
    <property type="term" value="F:3'-tRNA processing endoribonuclease activity"/>
    <property type="evidence" value="ECO:0007669"/>
    <property type="project" value="TreeGrafter"/>
</dbReference>
<dbReference type="GO" id="GO:0004526">
    <property type="term" value="F:ribonuclease P activity"/>
    <property type="evidence" value="ECO:0007669"/>
    <property type="project" value="UniProtKB-UniRule"/>
</dbReference>
<dbReference type="GO" id="GO:0000049">
    <property type="term" value="F:tRNA binding"/>
    <property type="evidence" value="ECO:0007669"/>
    <property type="project" value="UniProtKB-UniRule"/>
</dbReference>
<dbReference type="GO" id="GO:0001682">
    <property type="term" value="P:tRNA 5'-leader removal"/>
    <property type="evidence" value="ECO:0007669"/>
    <property type="project" value="UniProtKB-UniRule"/>
</dbReference>
<dbReference type="FunFam" id="3.30.230.10:FF:000021">
    <property type="entry name" value="Ribonuclease P protein component"/>
    <property type="match status" value="1"/>
</dbReference>
<dbReference type="Gene3D" id="3.30.230.10">
    <property type="match status" value="1"/>
</dbReference>
<dbReference type="HAMAP" id="MF_00227">
    <property type="entry name" value="RNase_P"/>
    <property type="match status" value="1"/>
</dbReference>
<dbReference type="InterPro" id="IPR020568">
    <property type="entry name" value="Ribosomal_Su5_D2-typ_SF"/>
</dbReference>
<dbReference type="InterPro" id="IPR014721">
    <property type="entry name" value="Ribsml_uS5_D2-typ_fold_subgr"/>
</dbReference>
<dbReference type="InterPro" id="IPR000100">
    <property type="entry name" value="RNase_P"/>
</dbReference>
<dbReference type="InterPro" id="IPR020539">
    <property type="entry name" value="RNase_P_CS"/>
</dbReference>
<dbReference type="NCBIfam" id="TIGR00188">
    <property type="entry name" value="rnpA"/>
    <property type="match status" value="1"/>
</dbReference>
<dbReference type="PANTHER" id="PTHR33992">
    <property type="entry name" value="RIBONUCLEASE P PROTEIN COMPONENT"/>
    <property type="match status" value="1"/>
</dbReference>
<dbReference type="PANTHER" id="PTHR33992:SF1">
    <property type="entry name" value="RIBONUCLEASE P PROTEIN COMPONENT"/>
    <property type="match status" value="1"/>
</dbReference>
<dbReference type="Pfam" id="PF00825">
    <property type="entry name" value="Ribonuclease_P"/>
    <property type="match status" value="1"/>
</dbReference>
<dbReference type="SUPFAM" id="SSF54211">
    <property type="entry name" value="Ribosomal protein S5 domain 2-like"/>
    <property type="match status" value="1"/>
</dbReference>
<dbReference type="PROSITE" id="PS00648">
    <property type="entry name" value="RIBONUCLEASE_P"/>
    <property type="match status" value="1"/>
</dbReference>